<name>EFG_MOOTA</name>
<organism>
    <name type="scientific">Moorella thermoacetica (strain ATCC 39073 / JCM 9320)</name>
    <dbReference type="NCBI Taxonomy" id="264732"/>
    <lineage>
        <taxon>Bacteria</taxon>
        <taxon>Bacillati</taxon>
        <taxon>Bacillota</taxon>
        <taxon>Clostridia</taxon>
        <taxon>Moorellales</taxon>
        <taxon>Moorellaceae</taxon>
        <taxon>Moorella</taxon>
    </lineage>
</organism>
<accession>Q2RFP4</accession>
<dbReference type="EMBL" id="CP000232">
    <property type="protein sequence ID" value="ABC20745.1"/>
    <property type="molecule type" value="Genomic_DNA"/>
</dbReference>
<dbReference type="RefSeq" id="YP_431288.1">
    <property type="nucleotide sequence ID" value="NC_007644.1"/>
</dbReference>
<dbReference type="SMR" id="Q2RFP4"/>
<dbReference type="STRING" id="264732.Moth_2463"/>
<dbReference type="EnsemblBacteria" id="ABC20745">
    <property type="protein sequence ID" value="ABC20745"/>
    <property type="gene ID" value="Moth_2463"/>
</dbReference>
<dbReference type="KEGG" id="mta:Moth_2463"/>
<dbReference type="PATRIC" id="fig|264732.11.peg.2681"/>
<dbReference type="eggNOG" id="COG0480">
    <property type="taxonomic scope" value="Bacteria"/>
</dbReference>
<dbReference type="HOGENOM" id="CLU_002794_4_1_9"/>
<dbReference type="OrthoDB" id="9804431at2"/>
<dbReference type="GO" id="GO:0005737">
    <property type="term" value="C:cytoplasm"/>
    <property type="evidence" value="ECO:0007669"/>
    <property type="project" value="UniProtKB-SubCell"/>
</dbReference>
<dbReference type="GO" id="GO:0005525">
    <property type="term" value="F:GTP binding"/>
    <property type="evidence" value="ECO:0007669"/>
    <property type="project" value="UniProtKB-UniRule"/>
</dbReference>
<dbReference type="GO" id="GO:0003924">
    <property type="term" value="F:GTPase activity"/>
    <property type="evidence" value="ECO:0007669"/>
    <property type="project" value="InterPro"/>
</dbReference>
<dbReference type="GO" id="GO:0003746">
    <property type="term" value="F:translation elongation factor activity"/>
    <property type="evidence" value="ECO:0007669"/>
    <property type="project" value="UniProtKB-UniRule"/>
</dbReference>
<dbReference type="GO" id="GO:0032790">
    <property type="term" value="P:ribosome disassembly"/>
    <property type="evidence" value="ECO:0007669"/>
    <property type="project" value="TreeGrafter"/>
</dbReference>
<dbReference type="CDD" id="cd01886">
    <property type="entry name" value="EF-G"/>
    <property type="match status" value="1"/>
</dbReference>
<dbReference type="CDD" id="cd16262">
    <property type="entry name" value="EFG_III"/>
    <property type="match status" value="1"/>
</dbReference>
<dbReference type="CDD" id="cd01434">
    <property type="entry name" value="EFG_mtEFG1_IV"/>
    <property type="match status" value="1"/>
</dbReference>
<dbReference type="CDD" id="cd03713">
    <property type="entry name" value="EFG_mtEFG_C"/>
    <property type="match status" value="1"/>
</dbReference>
<dbReference type="CDD" id="cd04088">
    <property type="entry name" value="EFG_mtEFG_II"/>
    <property type="match status" value="1"/>
</dbReference>
<dbReference type="FunFam" id="2.40.30.10:FF:000006">
    <property type="entry name" value="Elongation factor G"/>
    <property type="match status" value="1"/>
</dbReference>
<dbReference type="FunFam" id="3.30.230.10:FF:000003">
    <property type="entry name" value="Elongation factor G"/>
    <property type="match status" value="1"/>
</dbReference>
<dbReference type="FunFam" id="3.30.70.240:FF:000001">
    <property type="entry name" value="Elongation factor G"/>
    <property type="match status" value="1"/>
</dbReference>
<dbReference type="FunFam" id="3.30.70.870:FF:000001">
    <property type="entry name" value="Elongation factor G"/>
    <property type="match status" value="1"/>
</dbReference>
<dbReference type="FunFam" id="3.40.50.300:FF:000029">
    <property type="entry name" value="Elongation factor G"/>
    <property type="match status" value="1"/>
</dbReference>
<dbReference type="Gene3D" id="3.30.230.10">
    <property type="match status" value="1"/>
</dbReference>
<dbReference type="Gene3D" id="3.30.70.240">
    <property type="match status" value="1"/>
</dbReference>
<dbReference type="Gene3D" id="3.30.70.870">
    <property type="entry name" value="Elongation Factor G (Translational Gtpase), domain 3"/>
    <property type="match status" value="1"/>
</dbReference>
<dbReference type="Gene3D" id="3.40.50.300">
    <property type="entry name" value="P-loop containing nucleotide triphosphate hydrolases"/>
    <property type="match status" value="1"/>
</dbReference>
<dbReference type="Gene3D" id="2.40.30.10">
    <property type="entry name" value="Translation factors"/>
    <property type="match status" value="1"/>
</dbReference>
<dbReference type="HAMAP" id="MF_00054_B">
    <property type="entry name" value="EF_G_EF_2_B"/>
    <property type="match status" value="1"/>
</dbReference>
<dbReference type="InterPro" id="IPR041095">
    <property type="entry name" value="EFG_II"/>
</dbReference>
<dbReference type="InterPro" id="IPR009022">
    <property type="entry name" value="EFG_III"/>
</dbReference>
<dbReference type="InterPro" id="IPR035647">
    <property type="entry name" value="EFG_III/V"/>
</dbReference>
<dbReference type="InterPro" id="IPR047872">
    <property type="entry name" value="EFG_IV"/>
</dbReference>
<dbReference type="InterPro" id="IPR035649">
    <property type="entry name" value="EFG_V"/>
</dbReference>
<dbReference type="InterPro" id="IPR000640">
    <property type="entry name" value="EFG_V-like"/>
</dbReference>
<dbReference type="InterPro" id="IPR004161">
    <property type="entry name" value="EFTu-like_2"/>
</dbReference>
<dbReference type="InterPro" id="IPR031157">
    <property type="entry name" value="G_TR_CS"/>
</dbReference>
<dbReference type="InterPro" id="IPR027417">
    <property type="entry name" value="P-loop_NTPase"/>
</dbReference>
<dbReference type="InterPro" id="IPR020568">
    <property type="entry name" value="Ribosomal_Su5_D2-typ_SF"/>
</dbReference>
<dbReference type="InterPro" id="IPR014721">
    <property type="entry name" value="Ribsml_uS5_D2-typ_fold_subgr"/>
</dbReference>
<dbReference type="InterPro" id="IPR005225">
    <property type="entry name" value="Small_GTP-bd"/>
</dbReference>
<dbReference type="InterPro" id="IPR000795">
    <property type="entry name" value="T_Tr_GTP-bd_dom"/>
</dbReference>
<dbReference type="InterPro" id="IPR009000">
    <property type="entry name" value="Transl_B-barrel_sf"/>
</dbReference>
<dbReference type="InterPro" id="IPR004540">
    <property type="entry name" value="Transl_elong_EFG/EF2"/>
</dbReference>
<dbReference type="InterPro" id="IPR005517">
    <property type="entry name" value="Transl_elong_EFG/EF2_IV"/>
</dbReference>
<dbReference type="NCBIfam" id="TIGR00484">
    <property type="entry name" value="EF-G"/>
    <property type="match status" value="1"/>
</dbReference>
<dbReference type="NCBIfam" id="NF009379">
    <property type="entry name" value="PRK12740.1-3"/>
    <property type="match status" value="1"/>
</dbReference>
<dbReference type="NCBIfam" id="NF009381">
    <property type="entry name" value="PRK12740.1-5"/>
    <property type="match status" value="1"/>
</dbReference>
<dbReference type="NCBIfam" id="NF009891">
    <property type="entry name" value="PRK13351.1-1"/>
    <property type="match status" value="1"/>
</dbReference>
<dbReference type="NCBIfam" id="TIGR00231">
    <property type="entry name" value="small_GTP"/>
    <property type="match status" value="1"/>
</dbReference>
<dbReference type="PANTHER" id="PTHR43261:SF1">
    <property type="entry name" value="RIBOSOME-RELEASING FACTOR 2, MITOCHONDRIAL"/>
    <property type="match status" value="1"/>
</dbReference>
<dbReference type="PANTHER" id="PTHR43261">
    <property type="entry name" value="TRANSLATION ELONGATION FACTOR G-RELATED"/>
    <property type="match status" value="1"/>
</dbReference>
<dbReference type="Pfam" id="PF00679">
    <property type="entry name" value="EFG_C"/>
    <property type="match status" value="1"/>
</dbReference>
<dbReference type="Pfam" id="PF14492">
    <property type="entry name" value="EFG_III"/>
    <property type="match status" value="1"/>
</dbReference>
<dbReference type="Pfam" id="PF03764">
    <property type="entry name" value="EFG_IV"/>
    <property type="match status" value="1"/>
</dbReference>
<dbReference type="Pfam" id="PF00009">
    <property type="entry name" value="GTP_EFTU"/>
    <property type="match status" value="1"/>
</dbReference>
<dbReference type="Pfam" id="PF03144">
    <property type="entry name" value="GTP_EFTU_D2"/>
    <property type="match status" value="1"/>
</dbReference>
<dbReference type="PRINTS" id="PR00315">
    <property type="entry name" value="ELONGATNFCT"/>
</dbReference>
<dbReference type="SMART" id="SM00838">
    <property type="entry name" value="EFG_C"/>
    <property type="match status" value="1"/>
</dbReference>
<dbReference type="SMART" id="SM00889">
    <property type="entry name" value="EFG_IV"/>
    <property type="match status" value="1"/>
</dbReference>
<dbReference type="SUPFAM" id="SSF54980">
    <property type="entry name" value="EF-G C-terminal domain-like"/>
    <property type="match status" value="2"/>
</dbReference>
<dbReference type="SUPFAM" id="SSF52540">
    <property type="entry name" value="P-loop containing nucleoside triphosphate hydrolases"/>
    <property type="match status" value="1"/>
</dbReference>
<dbReference type="SUPFAM" id="SSF54211">
    <property type="entry name" value="Ribosomal protein S5 domain 2-like"/>
    <property type="match status" value="1"/>
</dbReference>
<dbReference type="SUPFAM" id="SSF50447">
    <property type="entry name" value="Translation proteins"/>
    <property type="match status" value="1"/>
</dbReference>
<dbReference type="PROSITE" id="PS00301">
    <property type="entry name" value="G_TR_1"/>
    <property type="match status" value="1"/>
</dbReference>
<dbReference type="PROSITE" id="PS51722">
    <property type="entry name" value="G_TR_2"/>
    <property type="match status" value="1"/>
</dbReference>
<gene>
    <name evidence="1" type="primary">fusA</name>
    <name type="ordered locus">Moth_2463</name>
</gene>
<comment type="function">
    <text evidence="1">Catalyzes the GTP-dependent ribosomal translocation step during translation elongation. During this step, the ribosome changes from the pre-translocational (PRE) to the post-translocational (POST) state as the newly formed A-site-bound peptidyl-tRNA and P-site-bound deacylated tRNA move to the P and E sites, respectively. Catalyzes the coordinated movement of the two tRNA molecules, the mRNA and conformational changes in the ribosome.</text>
</comment>
<comment type="subcellular location">
    <subcellularLocation>
        <location evidence="1">Cytoplasm</location>
    </subcellularLocation>
</comment>
<comment type="similarity">
    <text evidence="1">Belongs to the TRAFAC class translation factor GTPase superfamily. Classic translation factor GTPase family. EF-G/EF-2 subfamily.</text>
</comment>
<sequence>MAREYPLEKTRNIGIMAHIDAGKTTTTERILFYTGRVHRMGEVHDGNATMDWMIQEQERGITITSAATTCFWRNHRINIIDTPGHVDFTVEVERSLRVLDGAVAVFCSVGGVEPQSETVWRQADKYGVPRIAYINKMDRVGADFFRGVRMIAERLGANPVPIQLPIGAEDSFQGMVDLINMKAIYYTDELGTTLDEEPIPAEMEDLVQEYREKLLEAVAESDEELMIKYLEGEELTPEEIKAGIRKATIAVKMVPVLCGSSFKNKGVQPLLDAIVDFLPAPTDVPAIQGVDPETGDEDERHSSDNEPFAALAFKIMADPYVGKLTFFRVYSGTLKSGSYVYNSTKGRRERIGRILRMHANHREEIDEAYAGDIAAAVGLKETTTGDTLCDEQHPIVLEAMEFPEPVISVAIEPKTKADQEKMSIALQKLAEEDPTFRMYTDQETGQTIISGMGELHLEIIVDRLLREFKVGAKVGRPQVAYKETIRRPVKAEGKFIRQTGGHGQYGHVIIEIEPQEPGKGYEFVNKIVGGVIPKEYIPAVDAGIQEAMANGVLAGYPVVDVRATLVDGSYHEVDSSEMAFKIAGSLAFKDAAKKAQPVLLEPVMRVEVVVPDEYMGDVIGDLNSRRGRVEGMEPRAGAQVIRAHVPLAEMFGYATDLRSRTQGRGTYVMQFDHYEEVPKNIAEEIISKRQGA</sequence>
<proteinExistence type="inferred from homology"/>
<feature type="chain" id="PRO_0000263470" description="Elongation factor G">
    <location>
        <begin position="1"/>
        <end position="692"/>
    </location>
</feature>
<feature type="domain" description="tr-type G">
    <location>
        <begin position="8"/>
        <end position="282"/>
    </location>
</feature>
<feature type="binding site" evidence="1">
    <location>
        <begin position="17"/>
        <end position="24"/>
    </location>
    <ligand>
        <name>GTP</name>
        <dbReference type="ChEBI" id="CHEBI:37565"/>
    </ligand>
</feature>
<feature type="binding site" evidence="1">
    <location>
        <begin position="81"/>
        <end position="85"/>
    </location>
    <ligand>
        <name>GTP</name>
        <dbReference type="ChEBI" id="CHEBI:37565"/>
    </ligand>
</feature>
<feature type="binding site" evidence="1">
    <location>
        <begin position="135"/>
        <end position="138"/>
    </location>
    <ligand>
        <name>GTP</name>
        <dbReference type="ChEBI" id="CHEBI:37565"/>
    </ligand>
</feature>
<evidence type="ECO:0000255" key="1">
    <source>
        <dbReference type="HAMAP-Rule" id="MF_00054"/>
    </source>
</evidence>
<keyword id="KW-0963">Cytoplasm</keyword>
<keyword id="KW-0251">Elongation factor</keyword>
<keyword id="KW-0342">GTP-binding</keyword>
<keyword id="KW-0547">Nucleotide-binding</keyword>
<keyword id="KW-0648">Protein biosynthesis</keyword>
<protein>
    <recommendedName>
        <fullName evidence="1">Elongation factor G</fullName>
        <shortName evidence="1">EF-G</shortName>
    </recommendedName>
</protein>
<reference key="1">
    <citation type="journal article" date="2008" name="Environ. Microbiol.">
        <title>The complete genome sequence of Moorella thermoacetica (f. Clostridium thermoaceticum).</title>
        <authorList>
            <person name="Pierce E."/>
            <person name="Xie G."/>
            <person name="Barabote R.D."/>
            <person name="Saunders E."/>
            <person name="Han C.S."/>
            <person name="Detter J.C."/>
            <person name="Richardson P."/>
            <person name="Brettin T.S."/>
            <person name="Das A."/>
            <person name="Ljungdahl L.G."/>
            <person name="Ragsdale S.W."/>
        </authorList>
    </citation>
    <scope>NUCLEOTIDE SEQUENCE [LARGE SCALE GENOMIC DNA]</scope>
    <source>
        <strain>ATCC 39073 / JCM 9320</strain>
    </source>
</reference>